<comment type="function">
    <text evidence="1">Usually encoded in the trnK tRNA gene intron. Probably assists in splicing its own and other chloroplast group II introns.</text>
</comment>
<comment type="subcellular location">
    <subcellularLocation>
        <location>Plastid</location>
        <location>Chloroplast</location>
    </subcellularLocation>
</comment>
<comment type="similarity">
    <text evidence="1">Belongs to the intron maturase 2 family. MatK subfamily.</text>
</comment>
<sequence>MEEFPGYFELDRSRQHDFLYPLIFRESIYALAHDHGLNRNRSTLFENEVDYDKKYSLIIVKRLITRMYQRNHLIISANGSVQNPFWGHNQNLYSKILSEGFAVIVEIPFSLRVLSSFERKEKDIAKSPTLRSIHSIFPFLEDQFSHLDYLSHVLIPYPIHLEIAVQTLRYWVKDASSLHLLRIFLHEYWNSFSTPKKHITLFLKGNSRFFLFLYNSYVCEYESIFLFIRNQSSHFQSTSSGVFFERILFYVKIDHLVEVFVGTDFLDIRSFFKDPNMHYVRYQGKSILASKDTPLLMNKWKYYLVNLWQYHFSVWSQPGRININQLGKYSLDFLGYFSNVQLKSSVVRNQTLENSFLINNAMKKLETTVPILPLIGSLSRAKFCNALGHPISKPTRNDSSDSDIIDRFVRICRNLSHYHSGSSKKKSLYRIKYILRLSCVKTLARKHKSSVRAFLKRLGSELGDEFLTEEGVVLAVIFPKASGRLYRGRIWYLDIPCINDRVGDAEGSIFTK</sequence>
<reference key="1">
    <citation type="journal article" date="2000" name="Mol. Gen. Genet.">
        <title>Complete nucleotide sequence of the Oenothera elata plastid chromosome, representing plastome I of the five distinguishable Euoenothera plastomes.</title>
        <authorList>
            <person name="Hupfer H."/>
            <person name="Swiatek M."/>
            <person name="Hornung S."/>
            <person name="Herrmann R.G."/>
            <person name="Maier R.M."/>
            <person name="Chiu W.-L."/>
            <person name="Sears B."/>
        </authorList>
    </citation>
    <scope>NUCLEOTIDE SEQUENCE [LARGE SCALE GENOMIC DNA]</scope>
    <source>
        <strain>cv. Johansen</strain>
    </source>
</reference>
<evidence type="ECO:0000255" key="1">
    <source>
        <dbReference type="HAMAP-Rule" id="MF_01390"/>
    </source>
</evidence>
<protein>
    <recommendedName>
        <fullName evidence="1">Maturase K</fullName>
    </recommendedName>
    <alternativeName>
        <fullName evidence="1">Intron maturase</fullName>
    </alternativeName>
</protein>
<organism>
    <name type="scientific">Oenothera elata subsp. hookeri</name>
    <name type="common">Hooker's evening primrose</name>
    <name type="synonym">Oenothera hookeri</name>
    <dbReference type="NCBI Taxonomy" id="85636"/>
    <lineage>
        <taxon>Eukaryota</taxon>
        <taxon>Viridiplantae</taxon>
        <taxon>Streptophyta</taxon>
        <taxon>Embryophyta</taxon>
        <taxon>Tracheophyta</taxon>
        <taxon>Spermatophyta</taxon>
        <taxon>Magnoliopsida</taxon>
        <taxon>eudicotyledons</taxon>
        <taxon>Gunneridae</taxon>
        <taxon>Pentapetalae</taxon>
        <taxon>rosids</taxon>
        <taxon>malvids</taxon>
        <taxon>Myrtales</taxon>
        <taxon>Onagraceae</taxon>
        <taxon>Onagroideae</taxon>
        <taxon>Onagreae</taxon>
        <taxon>Oenothera</taxon>
    </lineage>
</organism>
<accession>Q9MTQ1</accession>
<dbReference type="EMBL" id="AJ271079">
    <property type="protein sequence ID" value="CAB67124.1"/>
    <property type="molecule type" value="Genomic_DNA"/>
</dbReference>
<dbReference type="RefSeq" id="NP_084659.1">
    <property type="nucleotide sequence ID" value="NC_002693.2"/>
</dbReference>
<dbReference type="GeneID" id="802733"/>
<dbReference type="GO" id="GO:0009507">
    <property type="term" value="C:chloroplast"/>
    <property type="evidence" value="ECO:0007669"/>
    <property type="project" value="UniProtKB-SubCell"/>
</dbReference>
<dbReference type="GO" id="GO:0003723">
    <property type="term" value="F:RNA binding"/>
    <property type="evidence" value="ECO:0007669"/>
    <property type="project" value="UniProtKB-KW"/>
</dbReference>
<dbReference type="GO" id="GO:0006397">
    <property type="term" value="P:mRNA processing"/>
    <property type="evidence" value="ECO:0007669"/>
    <property type="project" value="UniProtKB-KW"/>
</dbReference>
<dbReference type="GO" id="GO:0008380">
    <property type="term" value="P:RNA splicing"/>
    <property type="evidence" value="ECO:0007669"/>
    <property type="project" value="UniProtKB-UniRule"/>
</dbReference>
<dbReference type="GO" id="GO:0008033">
    <property type="term" value="P:tRNA processing"/>
    <property type="evidence" value="ECO:0007669"/>
    <property type="project" value="UniProtKB-KW"/>
</dbReference>
<dbReference type="HAMAP" id="MF_01390">
    <property type="entry name" value="MatK"/>
    <property type="match status" value="1"/>
</dbReference>
<dbReference type="InterPro" id="IPR024937">
    <property type="entry name" value="Domain_X"/>
</dbReference>
<dbReference type="InterPro" id="IPR002866">
    <property type="entry name" value="Maturase_MatK"/>
</dbReference>
<dbReference type="InterPro" id="IPR024942">
    <property type="entry name" value="Maturase_MatK_N"/>
</dbReference>
<dbReference type="PANTHER" id="PTHR34811">
    <property type="entry name" value="MATURASE K"/>
    <property type="match status" value="1"/>
</dbReference>
<dbReference type="PANTHER" id="PTHR34811:SF1">
    <property type="entry name" value="MATURASE K"/>
    <property type="match status" value="1"/>
</dbReference>
<dbReference type="Pfam" id="PF01348">
    <property type="entry name" value="Intron_maturas2"/>
    <property type="match status" value="1"/>
</dbReference>
<dbReference type="Pfam" id="PF01824">
    <property type="entry name" value="MatK_N"/>
    <property type="match status" value="1"/>
</dbReference>
<proteinExistence type="inferred from homology"/>
<feature type="chain" id="PRO_0000143556" description="Maturase K">
    <location>
        <begin position="1"/>
        <end position="512"/>
    </location>
</feature>
<gene>
    <name evidence="1" type="primary">matK</name>
</gene>
<keyword id="KW-0150">Chloroplast</keyword>
<keyword id="KW-0507">mRNA processing</keyword>
<keyword id="KW-0934">Plastid</keyword>
<keyword id="KW-0694">RNA-binding</keyword>
<keyword id="KW-0819">tRNA processing</keyword>
<geneLocation type="chloroplast"/>
<name>MATK_OENEH</name>